<dbReference type="EC" id="2.1.1.-"/>
<dbReference type="EMBL" id="AE005673">
    <property type="protein sequence ID" value="AAK23307.1"/>
    <property type="molecule type" value="Genomic_DNA"/>
</dbReference>
<dbReference type="PIR" id="G87413">
    <property type="entry name" value="G87413"/>
</dbReference>
<dbReference type="RefSeq" id="NP_420139.1">
    <property type="nucleotide sequence ID" value="NC_002696.2"/>
</dbReference>
<dbReference type="RefSeq" id="WP_010919203.1">
    <property type="nucleotide sequence ID" value="NC_002696.2"/>
</dbReference>
<dbReference type="SMR" id="Q9A8M7"/>
<dbReference type="STRING" id="190650.CC_1326"/>
<dbReference type="EnsemblBacteria" id="AAK23307">
    <property type="protein sequence ID" value="AAK23307"/>
    <property type="gene ID" value="CC_1326"/>
</dbReference>
<dbReference type="KEGG" id="ccr:CC_1326"/>
<dbReference type="PATRIC" id="fig|190650.5.peg.1354"/>
<dbReference type="eggNOG" id="COG2265">
    <property type="taxonomic scope" value="Bacteria"/>
</dbReference>
<dbReference type="HOGENOM" id="CLU_014689_8_0_5"/>
<dbReference type="BioCyc" id="CAULO:CC1326-MONOMER"/>
<dbReference type="Proteomes" id="UP000001816">
    <property type="component" value="Chromosome"/>
</dbReference>
<dbReference type="GO" id="GO:0051539">
    <property type="term" value="F:4 iron, 4 sulfur cluster binding"/>
    <property type="evidence" value="ECO:0007669"/>
    <property type="project" value="UniProtKB-KW"/>
</dbReference>
<dbReference type="GO" id="GO:0046872">
    <property type="term" value="F:metal ion binding"/>
    <property type="evidence" value="ECO:0007669"/>
    <property type="project" value="UniProtKB-KW"/>
</dbReference>
<dbReference type="GO" id="GO:0070041">
    <property type="term" value="F:rRNA (uridine-C5-)-methyltransferase activity"/>
    <property type="evidence" value="ECO:0007669"/>
    <property type="project" value="TreeGrafter"/>
</dbReference>
<dbReference type="GO" id="GO:0070475">
    <property type="term" value="P:rRNA base methylation"/>
    <property type="evidence" value="ECO:0007669"/>
    <property type="project" value="TreeGrafter"/>
</dbReference>
<dbReference type="CDD" id="cd02440">
    <property type="entry name" value="AdoMet_MTases"/>
    <property type="match status" value="1"/>
</dbReference>
<dbReference type="Gene3D" id="2.40.50.1070">
    <property type="match status" value="1"/>
</dbReference>
<dbReference type="Gene3D" id="2.40.50.140">
    <property type="entry name" value="Nucleic acid-binding proteins"/>
    <property type="match status" value="1"/>
</dbReference>
<dbReference type="Gene3D" id="3.40.50.150">
    <property type="entry name" value="Vaccinia Virus protein VP39"/>
    <property type="match status" value="1"/>
</dbReference>
<dbReference type="InterPro" id="IPR030390">
    <property type="entry name" value="MeTrfase_TrmA_AS"/>
</dbReference>
<dbReference type="InterPro" id="IPR012340">
    <property type="entry name" value="NA-bd_OB-fold"/>
</dbReference>
<dbReference type="InterPro" id="IPR029063">
    <property type="entry name" value="SAM-dependent_MTases_sf"/>
</dbReference>
<dbReference type="InterPro" id="IPR002792">
    <property type="entry name" value="TRAM_dom"/>
</dbReference>
<dbReference type="InterPro" id="IPR010280">
    <property type="entry name" value="U5_MeTrfase_fam"/>
</dbReference>
<dbReference type="PANTHER" id="PTHR11061:SF49">
    <property type="entry name" value="23S RRNA (URACIL(1939)-C(5))-METHYLTRANSFERASE RLMD"/>
    <property type="match status" value="1"/>
</dbReference>
<dbReference type="PANTHER" id="PTHR11061">
    <property type="entry name" value="RNA M5U METHYLTRANSFERASE"/>
    <property type="match status" value="1"/>
</dbReference>
<dbReference type="Pfam" id="PF01938">
    <property type="entry name" value="TRAM"/>
    <property type="match status" value="1"/>
</dbReference>
<dbReference type="Pfam" id="PF05958">
    <property type="entry name" value="tRNA_U5-meth_tr"/>
    <property type="match status" value="1"/>
</dbReference>
<dbReference type="SUPFAM" id="SSF50249">
    <property type="entry name" value="Nucleic acid-binding proteins"/>
    <property type="match status" value="1"/>
</dbReference>
<dbReference type="SUPFAM" id="SSF53335">
    <property type="entry name" value="S-adenosyl-L-methionine-dependent methyltransferases"/>
    <property type="match status" value="1"/>
</dbReference>
<dbReference type="PROSITE" id="PS51687">
    <property type="entry name" value="SAM_MT_RNA_M5U"/>
    <property type="match status" value="1"/>
</dbReference>
<dbReference type="PROSITE" id="PS50926">
    <property type="entry name" value="TRAM"/>
    <property type="match status" value="1"/>
</dbReference>
<dbReference type="PROSITE" id="PS01230">
    <property type="entry name" value="TRMA_1"/>
    <property type="match status" value="1"/>
</dbReference>
<reference key="1">
    <citation type="journal article" date="2001" name="Proc. Natl. Acad. Sci. U.S.A.">
        <title>Complete genome sequence of Caulobacter crescentus.</title>
        <authorList>
            <person name="Nierman W.C."/>
            <person name="Feldblyum T.V."/>
            <person name="Laub M.T."/>
            <person name="Paulsen I.T."/>
            <person name="Nelson K.E."/>
            <person name="Eisen J.A."/>
            <person name="Heidelberg J.F."/>
            <person name="Alley M.R.K."/>
            <person name="Ohta N."/>
            <person name="Maddock J.R."/>
            <person name="Potocka I."/>
            <person name="Nelson W.C."/>
            <person name="Newton A."/>
            <person name="Stephens C."/>
            <person name="Phadke N.D."/>
            <person name="Ely B."/>
            <person name="DeBoy R.T."/>
            <person name="Dodson R.J."/>
            <person name="Durkin A.S."/>
            <person name="Gwinn M.L."/>
            <person name="Haft D.H."/>
            <person name="Kolonay J.F."/>
            <person name="Smit J."/>
            <person name="Craven M.B."/>
            <person name="Khouri H.M."/>
            <person name="Shetty J."/>
            <person name="Berry K.J."/>
            <person name="Utterback T.R."/>
            <person name="Tran K."/>
            <person name="Wolf A.M."/>
            <person name="Vamathevan J.J."/>
            <person name="Ermolaeva M.D."/>
            <person name="White O."/>
            <person name="Salzberg S.L."/>
            <person name="Venter J.C."/>
            <person name="Shapiro L."/>
            <person name="Fraser C.M."/>
        </authorList>
    </citation>
    <scope>NUCLEOTIDE SEQUENCE [LARGE SCALE GENOMIC DNA]</scope>
    <source>
        <strain>ATCC 19089 / CIP 103742 / CB 15</strain>
    </source>
</reference>
<organism>
    <name type="scientific">Caulobacter vibrioides (strain ATCC 19089 / CIP 103742 / CB 15)</name>
    <name type="common">Caulobacter crescentus</name>
    <dbReference type="NCBI Taxonomy" id="190650"/>
    <lineage>
        <taxon>Bacteria</taxon>
        <taxon>Pseudomonadati</taxon>
        <taxon>Pseudomonadota</taxon>
        <taxon>Alphaproteobacteria</taxon>
        <taxon>Caulobacterales</taxon>
        <taxon>Caulobacteraceae</taxon>
        <taxon>Caulobacter</taxon>
    </lineage>
</organism>
<protein>
    <recommendedName>
        <fullName>Uncharacterized RNA methyltransferase CC_1326</fullName>
        <ecNumber>2.1.1.-</ecNumber>
    </recommendedName>
</protein>
<name>Y1326_CAUVC</name>
<gene>
    <name type="ordered locus">CC_1326</name>
</gene>
<comment type="similarity">
    <text evidence="3">Belongs to the class I-like SAM-binding methyltransferase superfamily. RNA M5U methyltransferase family.</text>
</comment>
<keyword id="KW-0004">4Fe-4S</keyword>
<keyword id="KW-0408">Iron</keyword>
<keyword id="KW-0411">Iron-sulfur</keyword>
<keyword id="KW-0479">Metal-binding</keyword>
<keyword id="KW-0489">Methyltransferase</keyword>
<keyword id="KW-1185">Reference proteome</keyword>
<keyword id="KW-0949">S-adenosyl-L-methionine</keyword>
<keyword id="KW-0808">Transferase</keyword>
<evidence type="ECO:0000250" key="1"/>
<evidence type="ECO:0000255" key="2">
    <source>
        <dbReference type="PROSITE-ProRule" id="PRU00208"/>
    </source>
</evidence>
<evidence type="ECO:0000255" key="3">
    <source>
        <dbReference type="PROSITE-ProRule" id="PRU01024"/>
    </source>
</evidence>
<accession>Q9A8M7</accession>
<proteinExistence type="inferred from homology"/>
<feature type="chain" id="PRO_0000161962" description="Uncharacterized RNA methyltransferase CC_1326">
    <location>
        <begin position="1"/>
        <end position="415"/>
    </location>
</feature>
<feature type="domain" description="TRAM" evidence="2">
    <location>
        <begin position="1"/>
        <end position="52"/>
    </location>
</feature>
<feature type="active site" description="Nucleophile" evidence="3">
    <location>
        <position position="373"/>
    </location>
</feature>
<feature type="binding site" evidence="1">
    <location>
        <position position="62"/>
    </location>
    <ligand>
        <name>[4Fe-4S] cluster</name>
        <dbReference type="ChEBI" id="CHEBI:49883"/>
    </ligand>
</feature>
<feature type="binding site" evidence="1">
    <location>
        <position position="68"/>
    </location>
    <ligand>
        <name>[4Fe-4S] cluster</name>
        <dbReference type="ChEBI" id="CHEBI:49883"/>
    </ligand>
</feature>
<feature type="binding site" evidence="1">
    <location>
        <position position="71"/>
    </location>
    <ligand>
        <name>[4Fe-4S] cluster</name>
        <dbReference type="ChEBI" id="CHEBI:49883"/>
    </ligand>
</feature>
<feature type="binding site" evidence="1">
    <location>
        <position position="147"/>
    </location>
    <ligand>
        <name>[4Fe-4S] cluster</name>
        <dbReference type="ChEBI" id="CHEBI:49883"/>
    </ligand>
</feature>
<feature type="binding site" evidence="3">
    <location>
        <position position="252"/>
    </location>
    <ligand>
        <name>S-adenosyl-L-methionine</name>
        <dbReference type="ChEBI" id="CHEBI:59789"/>
    </ligand>
</feature>
<feature type="binding site" evidence="3">
    <location>
        <position position="279"/>
    </location>
    <ligand>
        <name>S-adenosyl-L-methionine</name>
        <dbReference type="ChEBI" id="CHEBI:59789"/>
    </ligand>
</feature>
<feature type="binding site" evidence="3">
    <location>
        <position position="299"/>
    </location>
    <ligand>
        <name>S-adenosyl-L-methionine</name>
        <dbReference type="ChEBI" id="CHEBI:59789"/>
    </ligand>
</feature>
<feature type="binding site" evidence="3">
    <location>
        <position position="347"/>
    </location>
    <ligand>
        <name>S-adenosyl-L-methionine</name>
        <dbReference type="ChEBI" id="CHEBI:59789"/>
    </ligand>
</feature>
<sequence length="415" mass="43670">MQDLTINAIGAQGDGLARTADGKPAFVPLTLPGEVVRAKMDGARGEVVEILAPSPERVAPACRHYGVCGGCALQHWAAEPYRAWKAEQVRLQLSMEGLETEILPTFAAPPASRRRVALHARKGGKGQGARLGFKERRSWNLVSIEECPVTDPRLVAALPALARLAEPFLEHPKSAPTLHVTLTATGLDIDITGVERKSGGLSADARMRAAMAAGEGDFARVTLAGETIYGARQPLVKLGQAVVALPPGSFLQAVPAAEKAMVELAVAEAQGASRVADLYCGVGTFTFPLAEVAQVYAAEMSAPAITALKAAIGGAPGLKPITAEARDLVRRPVLSTELAKTDVVVIDPPRAGAAEQTVEIAKSKVAKVLGVSCNPQTFAKDARVLVDAGFKLVRVTPVDQFVWSPHIELVGVFTR</sequence>